<protein>
    <recommendedName>
        <fullName evidence="1">Glycine--tRNA ligase beta subunit</fullName>
        <ecNumber evidence="1">6.1.1.14</ecNumber>
    </recommendedName>
    <alternativeName>
        <fullName evidence="1">Glycyl-tRNA synthetase beta subunit</fullName>
        <shortName evidence="1">GlyRS</shortName>
    </alternativeName>
</protein>
<name>SYGB_LISW6</name>
<accession>A0AIQ9</accession>
<feature type="chain" id="PRO_1000006377" description="Glycine--tRNA ligase beta subunit">
    <location>
        <begin position="1"/>
        <end position="688"/>
    </location>
</feature>
<evidence type="ECO:0000255" key="1">
    <source>
        <dbReference type="HAMAP-Rule" id="MF_00255"/>
    </source>
</evidence>
<proteinExistence type="inferred from homology"/>
<comment type="catalytic activity">
    <reaction evidence="1">
        <text>tRNA(Gly) + glycine + ATP = glycyl-tRNA(Gly) + AMP + diphosphate</text>
        <dbReference type="Rhea" id="RHEA:16013"/>
        <dbReference type="Rhea" id="RHEA-COMP:9664"/>
        <dbReference type="Rhea" id="RHEA-COMP:9683"/>
        <dbReference type="ChEBI" id="CHEBI:30616"/>
        <dbReference type="ChEBI" id="CHEBI:33019"/>
        <dbReference type="ChEBI" id="CHEBI:57305"/>
        <dbReference type="ChEBI" id="CHEBI:78442"/>
        <dbReference type="ChEBI" id="CHEBI:78522"/>
        <dbReference type="ChEBI" id="CHEBI:456215"/>
        <dbReference type="EC" id="6.1.1.14"/>
    </reaction>
</comment>
<comment type="subunit">
    <text evidence="1">Tetramer of two alpha and two beta subunits.</text>
</comment>
<comment type="subcellular location">
    <subcellularLocation>
        <location evidence="1">Cytoplasm</location>
    </subcellularLocation>
</comment>
<comment type="similarity">
    <text evidence="1">Belongs to the class-II aminoacyl-tRNA synthetase family.</text>
</comment>
<keyword id="KW-0030">Aminoacyl-tRNA synthetase</keyword>
<keyword id="KW-0067">ATP-binding</keyword>
<keyword id="KW-0963">Cytoplasm</keyword>
<keyword id="KW-0436">Ligase</keyword>
<keyword id="KW-0547">Nucleotide-binding</keyword>
<keyword id="KW-0648">Protein biosynthesis</keyword>
<reference key="1">
    <citation type="journal article" date="2006" name="J. Bacteriol.">
        <title>Whole-genome sequence of Listeria welshimeri reveals common steps in genome reduction with Listeria innocua as compared to Listeria monocytogenes.</title>
        <authorList>
            <person name="Hain T."/>
            <person name="Steinweg C."/>
            <person name="Kuenne C.T."/>
            <person name="Billion A."/>
            <person name="Ghai R."/>
            <person name="Chatterjee S.S."/>
            <person name="Domann E."/>
            <person name="Kaerst U."/>
            <person name="Goesmann A."/>
            <person name="Bekel T."/>
            <person name="Bartels D."/>
            <person name="Kaiser O."/>
            <person name="Meyer F."/>
            <person name="Puehler A."/>
            <person name="Weisshaar B."/>
            <person name="Wehland J."/>
            <person name="Liang C."/>
            <person name="Dandekar T."/>
            <person name="Lampidis R."/>
            <person name="Kreft J."/>
            <person name="Goebel W."/>
            <person name="Chakraborty T."/>
        </authorList>
    </citation>
    <scope>NUCLEOTIDE SEQUENCE [LARGE SCALE GENOMIC DNA]</scope>
    <source>
        <strain>ATCC 35897 / DSM 20650 / CCUG 15529 / CIP 8149 / NCTC 11857 / SLCC 5334 / V8</strain>
    </source>
</reference>
<gene>
    <name evidence="1" type="primary">glyS</name>
    <name type="ordered locus">lwe1473</name>
</gene>
<organism>
    <name type="scientific">Listeria welshimeri serovar 6b (strain ATCC 35897 / DSM 20650 / CCUG 15529 / CIP 8149 / NCTC 11857 / SLCC 5334 / V8)</name>
    <dbReference type="NCBI Taxonomy" id="386043"/>
    <lineage>
        <taxon>Bacteria</taxon>
        <taxon>Bacillati</taxon>
        <taxon>Bacillota</taxon>
        <taxon>Bacilli</taxon>
        <taxon>Bacillales</taxon>
        <taxon>Listeriaceae</taxon>
        <taxon>Listeria</taxon>
    </lineage>
</organism>
<sequence>MSKDFLLEIGLEEMPAQYVTSSVAQLEKRVSDWLNENQITFEKIKTYSTPRRLTVLVEAMAEEQANRVEEAKGPAKKIALDDEGNWSKAALGFARSQKVEPADLTFREIKGVEYIYIKKEVIGEKTTALLPSLEKVVTSMTFPVSMHWGSNDLRYIRPIKWLIAMFGEEIIPFEITGVSTSNTSRGHRFLGKTATIKQPSDYPNALLEQFVVVNAEERKQAIVEQLRELESMENWQIKEDEDLLEEVTNLVEYPTVLAGNFEKEYLELPEEVLITTMKEHQRYFPVFSKDEELLPHFVTVRNGNHENLDTVARGNEKVLRARLSDADFFYQEDLKITIDEAVAKLQNIVFHEKLGTLTEKMKRVQKVALMLADYLDWQEEDKQDIIRLTNIYKFDLVTNIVGEFPELQGLMGEKYALLQGEKPAIAIAIREHYLPSSAEGALPQTDLGSIIAIADKLETLVGFFCVNIVPTGSADPFGLRRSAFGAMRIIQANGWDIPVLELLSRIVDMERAEGAVELPSDDVKKEVQTFLKNRLRVVLQNHHIRHDIIDAVIGGDPNTIPQLVDRAQILNKHVESDWFRPTVEALTRVMNISKKHEGNVEVDPSLFENKYEQALFDEIEKLKYDYANLTIVDRLRAFAALRTTIDDYFDNTLVMSENIELKNNRLALLFELASFIKEFAQMDEINVK</sequence>
<dbReference type="EC" id="6.1.1.14" evidence="1"/>
<dbReference type="EMBL" id="AM263198">
    <property type="protein sequence ID" value="CAK20891.1"/>
    <property type="molecule type" value="Genomic_DNA"/>
</dbReference>
<dbReference type="RefSeq" id="WP_011702266.1">
    <property type="nucleotide sequence ID" value="NC_008555.1"/>
</dbReference>
<dbReference type="SMR" id="A0AIQ9"/>
<dbReference type="STRING" id="386043.lwe1473"/>
<dbReference type="GeneID" id="61189349"/>
<dbReference type="KEGG" id="lwe:lwe1473"/>
<dbReference type="eggNOG" id="COG0751">
    <property type="taxonomic scope" value="Bacteria"/>
</dbReference>
<dbReference type="HOGENOM" id="CLU_007220_2_2_9"/>
<dbReference type="OrthoDB" id="9775440at2"/>
<dbReference type="Proteomes" id="UP000000779">
    <property type="component" value="Chromosome"/>
</dbReference>
<dbReference type="GO" id="GO:0005829">
    <property type="term" value="C:cytosol"/>
    <property type="evidence" value="ECO:0007669"/>
    <property type="project" value="TreeGrafter"/>
</dbReference>
<dbReference type="GO" id="GO:0005524">
    <property type="term" value="F:ATP binding"/>
    <property type="evidence" value="ECO:0007669"/>
    <property type="project" value="UniProtKB-UniRule"/>
</dbReference>
<dbReference type="GO" id="GO:0004820">
    <property type="term" value="F:glycine-tRNA ligase activity"/>
    <property type="evidence" value="ECO:0007669"/>
    <property type="project" value="UniProtKB-UniRule"/>
</dbReference>
<dbReference type="GO" id="GO:0006426">
    <property type="term" value="P:glycyl-tRNA aminoacylation"/>
    <property type="evidence" value="ECO:0007669"/>
    <property type="project" value="UniProtKB-UniRule"/>
</dbReference>
<dbReference type="HAMAP" id="MF_00255">
    <property type="entry name" value="Gly_tRNA_synth_beta"/>
    <property type="match status" value="1"/>
</dbReference>
<dbReference type="InterPro" id="IPR015944">
    <property type="entry name" value="Gly-tRNA-synth_bsu"/>
</dbReference>
<dbReference type="InterPro" id="IPR006194">
    <property type="entry name" value="Gly-tRNA-synth_heterodimer"/>
</dbReference>
<dbReference type="NCBIfam" id="TIGR00211">
    <property type="entry name" value="glyS"/>
    <property type="match status" value="1"/>
</dbReference>
<dbReference type="PANTHER" id="PTHR30075:SF2">
    <property type="entry name" value="GLYCINE--TRNA LIGASE, CHLOROPLASTIC_MITOCHONDRIAL 2"/>
    <property type="match status" value="1"/>
</dbReference>
<dbReference type="PANTHER" id="PTHR30075">
    <property type="entry name" value="GLYCYL-TRNA SYNTHETASE"/>
    <property type="match status" value="1"/>
</dbReference>
<dbReference type="Pfam" id="PF02092">
    <property type="entry name" value="tRNA_synt_2f"/>
    <property type="match status" value="1"/>
</dbReference>
<dbReference type="PRINTS" id="PR01045">
    <property type="entry name" value="TRNASYNTHGB"/>
</dbReference>
<dbReference type="SUPFAM" id="SSF109604">
    <property type="entry name" value="HD-domain/PDEase-like"/>
    <property type="match status" value="1"/>
</dbReference>
<dbReference type="PROSITE" id="PS50861">
    <property type="entry name" value="AA_TRNA_LIGASE_II_GLYAB"/>
    <property type="match status" value="1"/>
</dbReference>